<name>KGUA_STAA8</name>
<comment type="function">
    <text evidence="1">Essential for recycling GMP and indirectly, cGMP.</text>
</comment>
<comment type="catalytic activity">
    <reaction evidence="1">
        <text>GMP + ATP = GDP + ADP</text>
        <dbReference type="Rhea" id="RHEA:20780"/>
        <dbReference type="ChEBI" id="CHEBI:30616"/>
        <dbReference type="ChEBI" id="CHEBI:58115"/>
        <dbReference type="ChEBI" id="CHEBI:58189"/>
        <dbReference type="ChEBI" id="CHEBI:456216"/>
        <dbReference type="EC" id="2.7.4.8"/>
    </reaction>
</comment>
<comment type="subcellular location">
    <subcellularLocation>
        <location evidence="1">Cytoplasm</location>
    </subcellularLocation>
</comment>
<comment type="similarity">
    <text evidence="1">Belongs to the guanylate kinase family.</text>
</comment>
<keyword id="KW-0067">ATP-binding</keyword>
<keyword id="KW-0963">Cytoplasm</keyword>
<keyword id="KW-0418">Kinase</keyword>
<keyword id="KW-0547">Nucleotide-binding</keyword>
<keyword id="KW-1185">Reference proteome</keyword>
<keyword id="KW-0808">Transferase</keyword>
<gene>
    <name evidence="1" type="primary">gmk</name>
    <name type="ordered locus">SAOUHSC_01176</name>
</gene>
<protein>
    <recommendedName>
        <fullName evidence="1">Guanylate kinase</fullName>
        <ecNumber evidence="1">2.7.4.8</ecNumber>
    </recommendedName>
    <alternativeName>
        <fullName evidence="1">GMP kinase</fullName>
    </alternativeName>
</protein>
<feature type="chain" id="PRO_0000266408" description="Guanylate kinase">
    <location>
        <begin position="1"/>
        <end position="207"/>
    </location>
</feature>
<feature type="domain" description="Guanylate kinase-like" evidence="1">
    <location>
        <begin position="6"/>
        <end position="185"/>
    </location>
</feature>
<feature type="binding site" evidence="1">
    <location>
        <begin position="13"/>
        <end position="20"/>
    </location>
    <ligand>
        <name>ATP</name>
        <dbReference type="ChEBI" id="CHEBI:30616"/>
    </ligand>
</feature>
<accession>Q2G1U0</accession>
<proteinExistence type="inferred from homology"/>
<evidence type="ECO:0000255" key="1">
    <source>
        <dbReference type="HAMAP-Rule" id="MF_00328"/>
    </source>
</evidence>
<reference key="1">
    <citation type="book" date="2006" name="Gram positive pathogens, 2nd edition">
        <title>The Staphylococcus aureus NCTC 8325 genome.</title>
        <editorList>
            <person name="Fischetti V."/>
            <person name="Novick R."/>
            <person name="Ferretti J."/>
            <person name="Portnoy D."/>
            <person name="Rood J."/>
        </editorList>
        <authorList>
            <person name="Gillaspy A.F."/>
            <person name="Worrell V."/>
            <person name="Orvis J."/>
            <person name="Roe B.A."/>
            <person name="Dyer D.W."/>
            <person name="Iandolo J.J."/>
        </authorList>
    </citation>
    <scope>NUCLEOTIDE SEQUENCE [LARGE SCALE GENOMIC DNA]</scope>
    <source>
        <strain>NCTC 8325 / PS 47</strain>
    </source>
</reference>
<sequence>MDNEKGLLIVLSGPSGVGKGTVRKRIFEDPSTSYKYSISMTTRQMREGEVDGVDYFFKTRDAFEALIKDDQFIEYAEYVGNYYGTPVQYVKDTMDEGHDVFLEIEVEGAKQVRKKFPDALFIFLAPPSLEHLRERLVGRGTESDEKIQSRINEARKEVEMMNLYDYVVVNDEVELAKNRIQCIVEAEHLKRERVEAKYRKMILEAKK</sequence>
<dbReference type="EC" id="2.7.4.8" evidence="1"/>
<dbReference type="EMBL" id="CP000253">
    <property type="protein sequence ID" value="ABD30283.1"/>
    <property type="molecule type" value="Genomic_DNA"/>
</dbReference>
<dbReference type="RefSeq" id="WP_000368227.1">
    <property type="nucleotide sequence ID" value="NZ_LS483365.1"/>
</dbReference>
<dbReference type="RefSeq" id="YP_499715.1">
    <property type="nucleotide sequence ID" value="NC_007795.1"/>
</dbReference>
<dbReference type="SMR" id="Q2G1U0"/>
<dbReference type="STRING" id="93061.SAOUHSC_01176"/>
<dbReference type="PaxDb" id="1280-SAXN108_1208"/>
<dbReference type="GeneID" id="3920927"/>
<dbReference type="KEGG" id="sao:SAOUHSC_01176"/>
<dbReference type="PATRIC" id="fig|93061.5.peg.1079"/>
<dbReference type="eggNOG" id="COG0194">
    <property type="taxonomic scope" value="Bacteria"/>
</dbReference>
<dbReference type="HOGENOM" id="CLU_001715_1_2_9"/>
<dbReference type="OrthoDB" id="9808150at2"/>
<dbReference type="PRO" id="PR:Q2G1U0"/>
<dbReference type="Proteomes" id="UP000008816">
    <property type="component" value="Chromosome"/>
</dbReference>
<dbReference type="GO" id="GO:0005829">
    <property type="term" value="C:cytosol"/>
    <property type="evidence" value="ECO:0000318"/>
    <property type="project" value="GO_Central"/>
</dbReference>
<dbReference type="GO" id="GO:0005524">
    <property type="term" value="F:ATP binding"/>
    <property type="evidence" value="ECO:0007669"/>
    <property type="project" value="UniProtKB-UniRule"/>
</dbReference>
<dbReference type="GO" id="GO:0004385">
    <property type="term" value="F:guanylate kinase activity"/>
    <property type="evidence" value="ECO:0000318"/>
    <property type="project" value="GO_Central"/>
</dbReference>
<dbReference type="CDD" id="cd00071">
    <property type="entry name" value="GMPK"/>
    <property type="match status" value="1"/>
</dbReference>
<dbReference type="FunFam" id="3.40.50.300:FF:000855">
    <property type="entry name" value="Guanylate kinase"/>
    <property type="match status" value="1"/>
</dbReference>
<dbReference type="FunFam" id="3.30.63.10:FF:000002">
    <property type="entry name" value="Guanylate kinase 1"/>
    <property type="match status" value="1"/>
</dbReference>
<dbReference type="Gene3D" id="3.30.63.10">
    <property type="entry name" value="Guanylate Kinase phosphate binding domain"/>
    <property type="match status" value="1"/>
</dbReference>
<dbReference type="Gene3D" id="3.40.50.300">
    <property type="entry name" value="P-loop containing nucleotide triphosphate hydrolases"/>
    <property type="match status" value="1"/>
</dbReference>
<dbReference type="HAMAP" id="MF_00328">
    <property type="entry name" value="Guanylate_kinase"/>
    <property type="match status" value="1"/>
</dbReference>
<dbReference type="InterPro" id="IPR008145">
    <property type="entry name" value="GK/Ca_channel_bsu"/>
</dbReference>
<dbReference type="InterPro" id="IPR008144">
    <property type="entry name" value="Guanylate_kin-like_dom"/>
</dbReference>
<dbReference type="InterPro" id="IPR017665">
    <property type="entry name" value="Guanylate_kinase"/>
</dbReference>
<dbReference type="InterPro" id="IPR020590">
    <property type="entry name" value="Guanylate_kinase_CS"/>
</dbReference>
<dbReference type="InterPro" id="IPR027417">
    <property type="entry name" value="P-loop_NTPase"/>
</dbReference>
<dbReference type="NCBIfam" id="TIGR03263">
    <property type="entry name" value="guanyl_kin"/>
    <property type="match status" value="1"/>
</dbReference>
<dbReference type="PANTHER" id="PTHR23117:SF13">
    <property type="entry name" value="GUANYLATE KINASE"/>
    <property type="match status" value="1"/>
</dbReference>
<dbReference type="PANTHER" id="PTHR23117">
    <property type="entry name" value="GUANYLATE KINASE-RELATED"/>
    <property type="match status" value="1"/>
</dbReference>
<dbReference type="Pfam" id="PF00625">
    <property type="entry name" value="Guanylate_kin"/>
    <property type="match status" value="1"/>
</dbReference>
<dbReference type="SMART" id="SM00072">
    <property type="entry name" value="GuKc"/>
    <property type="match status" value="1"/>
</dbReference>
<dbReference type="SUPFAM" id="SSF52540">
    <property type="entry name" value="P-loop containing nucleoside triphosphate hydrolases"/>
    <property type="match status" value="1"/>
</dbReference>
<dbReference type="PROSITE" id="PS00856">
    <property type="entry name" value="GUANYLATE_KINASE_1"/>
    <property type="match status" value="1"/>
</dbReference>
<dbReference type="PROSITE" id="PS50052">
    <property type="entry name" value="GUANYLATE_KINASE_2"/>
    <property type="match status" value="1"/>
</dbReference>
<organism>
    <name type="scientific">Staphylococcus aureus (strain NCTC 8325 / PS 47)</name>
    <dbReference type="NCBI Taxonomy" id="93061"/>
    <lineage>
        <taxon>Bacteria</taxon>
        <taxon>Bacillati</taxon>
        <taxon>Bacillota</taxon>
        <taxon>Bacilli</taxon>
        <taxon>Bacillales</taxon>
        <taxon>Staphylococcaceae</taxon>
        <taxon>Staphylococcus</taxon>
    </lineage>
</organism>